<proteinExistence type="evidence at transcript level"/>
<sequence>MDSSTWSPPATATAEPLQAYERIRNAADISVIVIYFVVVMAVGLWAMFSTNRGTVGGFFLAGRSMVWWPIGASLFASNIGSGHFVGLAGTGAAAGIATGGFEWNALILVVLLGWVFVPIYIKAGVVTMPEYLRKRFGGQRIQVYLSVLSLVLYIFTKISADIFSGAIFINLALGLDLYLAIFILLAITALYTITGGLAAVIYTDTLQTVIMLLGSFILTGFAFHEVGGYSAFVTKYMNAIPTVTSYGNTTVKKECYTPRADSFHIFRDPLKGDLPWPGLIFGLTIISLWYWCTDQVIVQRCLSAKNMSHVKAGCIMCGYMKLLPMFLMVMPGMISRILFTEKVACTVPSECEKYCGTKVGCTNIAYPTLVVELMPNGLRGLMLSVMLASLMSSLTSIFNSASTLFTMDIYTKIRKKASEKELMIAGRLFMLVLIGVSIAWVPIVQSAQSGQLFDYIQSITSYLGPPIAAVFLLAIFCKRVNEPGAFWGLIIGFLIGVSRMITEFAYGTGSCMEPSNCPTIICGVHYLYFAIILFVITIIVILAISLFTKPIADVHLYRLCWSLRNSKEERIDLDAEDEDIQDAREDALEIDTEASEEKKGCLRQAYDMFCGLDQQKGPKMTKEEEAAMKLKMTDTSEKRLWRMVVNINGIILLAVAVFCHAYFA</sequence>
<name>SC5A1_SHEEP</name>
<evidence type="ECO:0000250" key="1"/>
<evidence type="ECO:0000250" key="2">
    <source>
        <dbReference type="UniProtKB" id="P11170"/>
    </source>
</evidence>
<evidence type="ECO:0000250" key="3">
    <source>
        <dbReference type="UniProtKB" id="P13866"/>
    </source>
</evidence>
<evidence type="ECO:0000250" key="4">
    <source>
        <dbReference type="UniProtKB" id="Q8C3K6"/>
    </source>
</evidence>
<evidence type="ECO:0000255" key="5"/>
<evidence type="ECO:0000305" key="6"/>
<protein>
    <recommendedName>
        <fullName evidence="3">Sodium/glucose cotransporter 1</fullName>
        <shortName>Na(+)/glucose cotransporter 1</shortName>
    </recommendedName>
    <alternativeName>
        <fullName>High affinity sodium-glucose cotransporter</fullName>
    </alternativeName>
    <alternativeName>
        <fullName>Solute carrier family 5 member 1</fullName>
    </alternativeName>
</protein>
<gene>
    <name type="primary">SLC5A1</name>
    <name evidence="3" type="synonym">SGLT1</name>
</gene>
<accession>P53791</accession>
<keyword id="KW-1003">Cell membrane</keyword>
<keyword id="KW-1015">Disulfide bond</keyword>
<keyword id="KW-0325">Glycoprotein</keyword>
<keyword id="KW-0406">Ion transport</keyword>
<keyword id="KW-0472">Membrane</keyword>
<keyword id="KW-1185">Reference proteome</keyword>
<keyword id="KW-0915">Sodium</keyword>
<keyword id="KW-0739">Sodium transport</keyword>
<keyword id="KW-0762">Sugar transport</keyword>
<keyword id="KW-0769">Symport</keyword>
<keyword id="KW-0812">Transmembrane</keyword>
<keyword id="KW-1133">Transmembrane helix</keyword>
<keyword id="KW-0813">Transport</keyword>
<feature type="chain" id="PRO_0000105371" description="Sodium/glucose cotransporter 1">
    <location>
        <begin position="1"/>
        <end position="664"/>
    </location>
</feature>
<feature type="topological domain" description="Extracellular" evidence="3">
    <location>
        <begin position="1"/>
        <end position="24"/>
    </location>
</feature>
<feature type="transmembrane region" description="Helical; Name=TM0" evidence="3">
    <location>
        <begin position="25"/>
        <end position="47"/>
    </location>
</feature>
<feature type="topological domain" description="Cytoplasmic" evidence="3">
    <location>
        <begin position="48"/>
        <end position="66"/>
    </location>
</feature>
<feature type="transmembrane region" description="Helical; Name=TM1" evidence="3">
    <location>
        <begin position="67"/>
        <end position="90"/>
    </location>
</feature>
<feature type="topological domain" description="Extracellular" evidence="3">
    <location>
        <begin position="91"/>
        <end position="95"/>
    </location>
</feature>
<feature type="transmembrane region" description="Helical; Name=TM2" evidence="3">
    <location>
        <begin position="96"/>
        <end position="117"/>
    </location>
</feature>
<feature type="topological domain" description="Cytoplasmic" evidence="3">
    <location>
        <begin position="118"/>
        <end position="139"/>
    </location>
</feature>
<feature type="transmembrane region" description="Helical; Name=TM3" evidence="3">
    <location>
        <begin position="140"/>
        <end position="169"/>
    </location>
</feature>
<feature type="topological domain" description="Extracellular" evidence="3">
    <location>
        <begin position="170"/>
        <end position="176"/>
    </location>
</feature>
<feature type="transmembrane region" description="Helical; Name=TM4" evidence="3">
    <location>
        <begin position="177"/>
        <end position="193"/>
    </location>
</feature>
<feature type="topological domain" description="Cytoplasmic" evidence="3">
    <location>
        <begin position="194"/>
        <end position="202"/>
    </location>
</feature>
<feature type="transmembrane region" description="Helical; Name=TM5" evidence="3">
    <location>
        <begin position="203"/>
        <end position="221"/>
    </location>
</feature>
<feature type="topological domain" description="Extracellular" evidence="3">
    <location>
        <begin position="222"/>
        <end position="275"/>
    </location>
</feature>
<feature type="transmembrane region" description="Helical; Name=TM6" evidence="3">
    <location>
        <begin position="276"/>
        <end position="295"/>
    </location>
</feature>
<feature type="topological domain" description="Cytoplasmic" evidence="3">
    <location>
        <begin position="296"/>
        <end position="309"/>
    </location>
</feature>
<feature type="transmembrane region" description="Helical; Name=TM7" evidence="3">
    <location>
        <begin position="310"/>
        <end position="331"/>
    </location>
</feature>
<feature type="topological domain" description="Extracellular" evidence="3">
    <location>
        <begin position="332"/>
        <end position="375"/>
    </location>
</feature>
<feature type="transmembrane region" description="Helical; Name=TM8" evidence="3">
    <location>
        <begin position="376"/>
        <end position="406"/>
    </location>
</feature>
<feature type="topological domain" description="Cytoplasmic" evidence="3">
    <location>
        <begin position="407"/>
        <end position="422"/>
    </location>
</feature>
<feature type="transmembrane region" description="Helical; Name=TM9" evidence="3">
    <location>
        <begin position="423"/>
        <end position="444"/>
    </location>
</feature>
<feature type="topological domain" description="Extracellular" evidence="3">
    <location>
        <begin position="445"/>
        <end position="451"/>
    </location>
</feature>
<feature type="transmembrane region" description="Helical; Name=TM10" evidence="3">
    <location>
        <begin position="452"/>
        <end position="477"/>
    </location>
</feature>
<feature type="topological domain" description="Cytoplasmic" evidence="3">
    <location>
        <begin position="478"/>
        <end position="481"/>
    </location>
</feature>
<feature type="transmembrane region" description="Helical; Name=TM11" evidence="3">
    <location>
        <begin position="482"/>
        <end position="504"/>
    </location>
</feature>
<feature type="topological domain" description="Extracellular" evidence="3">
    <location>
        <begin position="505"/>
        <end position="525"/>
    </location>
</feature>
<feature type="transmembrane region" description="Helical; Name=TM12" evidence="3">
    <location>
        <begin position="526"/>
        <end position="547"/>
    </location>
</feature>
<feature type="topological domain" description="Cytoplasmic" evidence="3">
    <location>
        <begin position="548"/>
        <end position="644"/>
    </location>
</feature>
<feature type="transmembrane region" description="Helical; Name=TM13" evidence="3">
    <location>
        <begin position="645"/>
        <end position="662"/>
    </location>
</feature>
<feature type="topological domain" description="Extracellular" evidence="3">
    <location>
        <begin position="663"/>
        <end position="664"/>
    </location>
</feature>
<feature type="binding site" evidence="1">
    <location>
        <position position="457"/>
    </location>
    <ligand>
        <name>D-glucose</name>
        <dbReference type="ChEBI" id="CHEBI:4167"/>
    </ligand>
</feature>
<feature type="site" description="Implicated in sodium coupling" evidence="1">
    <location>
        <position position="43"/>
    </location>
</feature>
<feature type="site" description="Implicated in sodium coupling" evidence="1">
    <location>
        <position position="300"/>
    </location>
</feature>
<feature type="site" description="Involved in sugar-binding/transport and inhibitor binding" evidence="1">
    <location>
        <position position="460"/>
    </location>
</feature>
<feature type="glycosylation site" description="N-linked (GlcNAc...) asparagine" evidence="5">
    <location>
        <position position="248"/>
    </location>
</feature>
<feature type="disulfide bond" evidence="2">
    <location>
        <begin position="255"/>
        <end position="610"/>
    </location>
</feature>
<feature type="disulfide bond" evidence="3">
    <location>
        <begin position="255"/>
        <end position="511"/>
    </location>
</feature>
<feature type="disulfide bond" evidence="3">
    <location>
        <begin position="345"/>
        <end position="351"/>
    </location>
</feature>
<feature type="disulfide bond" evidence="3">
    <location>
        <begin position="355"/>
        <end position="361"/>
    </location>
</feature>
<feature type="disulfide bond" evidence="3">
    <location>
        <begin position="517"/>
        <end position="522"/>
    </location>
</feature>
<comment type="function">
    <text evidence="3 4">Electrogenic Na(+)-coupled sugar symporter that actively transports D-glucose or D-galactose at the plasma membrane, with a Na(+) to sugar coupling ratio of 2:1. Transporter activity is driven by a transmembrane Na(+) electrochemical gradient set by the Na(+)/K(+) pump (By similarity). Has a primary role in the transport of dietary monosaccharides from enterocytes to blood. Responsible for the absorption of D-glucose or D-galactose across the apical brush-border membrane of enterocytes, whereas basolateral exit is provided by GLUT2. Additionally, functions as a D-glucose sensor in enteroendocrine cells, triggering the secretion of the incretins GCG and GIP that control food intake and energy homeostasis (By similarity). Together with SGLT2, functions in reabsorption of D-glucose from glomerular filtrate, playing a nonredundant role in the S3 segment of the proximal tubules (By similarity). Transports D-glucose into endometrial epithelial cells, controlling glycogen synthesis and nutritional support for the embryo as well as the decidual transformation of endometrium prior to conception (By similarity). Acts as a water channel enabling passive water transport in response to the osmotic gradient created upon sugar and Na(+) uptake. Has high water conductivity comparable to aquaporins and therefore is expected to play an important role in transepithelial water permeability, especially in the small intestine.</text>
</comment>
<comment type="catalytic activity">
    <reaction evidence="3">
        <text>D-glucose(out) + 2 Na(+)(out) = D-glucose(in) + 2 Na(+)(in)</text>
        <dbReference type="Rhea" id="RHEA:70495"/>
        <dbReference type="ChEBI" id="CHEBI:4167"/>
        <dbReference type="ChEBI" id="CHEBI:29101"/>
    </reaction>
    <physiologicalReaction direction="left-to-right" evidence="3">
        <dbReference type="Rhea" id="RHEA:70496"/>
    </physiologicalReaction>
</comment>
<comment type="catalytic activity">
    <reaction evidence="3">
        <text>D-galactose(out) + 2 Na(+)(out) = D-galactose(in) + 2 Na(+)(in)</text>
        <dbReference type="Rhea" id="RHEA:70499"/>
        <dbReference type="ChEBI" id="CHEBI:4139"/>
        <dbReference type="ChEBI" id="CHEBI:29101"/>
    </reaction>
    <physiologicalReaction direction="left-to-right" evidence="3">
        <dbReference type="Rhea" id="RHEA:70500"/>
    </physiologicalReaction>
</comment>
<comment type="activity regulation">
    <text evidence="3">Enhanced by the interaction with PDZK1IP1/MAP17; but unlike SLC5A2/SGLT2, PDZK1IP1 is not essential for SLC5A1 transporter activity (By similarity). Possibly modulated by cholesterol binding (By similarity).</text>
</comment>
<comment type="subcellular location">
    <subcellularLocation>
        <location evidence="4">Apical cell membrane</location>
        <topology evidence="3">Multi-pass membrane protein</topology>
    </subcellularLocation>
</comment>
<comment type="domain">
    <text evidence="3">The cholesterol-binding site is formed by transmembrane helices TM1, TM7 and TM13.</text>
</comment>
<comment type="PTM">
    <text evidence="3">N-glycosylation is not necessary for the cotransporter function.</text>
</comment>
<comment type="similarity">
    <text evidence="6">Belongs to the sodium:solute symporter (SSF) (TC 2.A.21) family.</text>
</comment>
<dbReference type="EMBL" id="X82411">
    <property type="protein sequence ID" value="CAA57809.1"/>
    <property type="molecule type" value="mRNA"/>
</dbReference>
<dbReference type="EMBL" id="X82410">
    <property type="protein sequence ID" value="CAA57808.1"/>
    <property type="molecule type" value="mRNA"/>
</dbReference>
<dbReference type="EMBL" id="AJ001026">
    <property type="protein sequence ID" value="CAA04483.1"/>
    <property type="molecule type" value="mRNA"/>
</dbReference>
<dbReference type="PIR" id="S59637">
    <property type="entry name" value="S59637"/>
</dbReference>
<dbReference type="PIR" id="S59638">
    <property type="entry name" value="S59638"/>
</dbReference>
<dbReference type="RefSeq" id="NP_001009404.1">
    <property type="nucleotide sequence ID" value="NM_001009404.1"/>
</dbReference>
<dbReference type="SMR" id="P53791"/>
<dbReference type="STRING" id="9940.ENSOARP00000012821"/>
<dbReference type="GlyCosmos" id="P53791">
    <property type="glycosylation" value="1 site, No reported glycans"/>
</dbReference>
<dbReference type="PaxDb" id="9940-ENSOARP00000012821"/>
<dbReference type="Ensembl" id="ENSOART00220081827">
    <property type="protein sequence ID" value="ENSOARP00220044107"/>
    <property type="gene ID" value="ENSOARG00220049126"/>
</dbReference>
<dbReference type="GeneID" id="492300"/>
<dbReference type="KEGG" id="oas:492300"/>
<dbReference type="CTD" id="6523"/>
<dbReference type="eggNOG" id="KOG2349">
    <property type="taxonomic scope" value="Eukaryota"/>
</dbReference>
<dbReference type="HOGENOM" id="CLU_018808_9_2_1"/>
<dbReference type="OMA" id="WHTLLTG"/>
<dbReference type="OrthoDB" id="6132759at2759"/>
<dbReference type="Proteomes" id="UP000002356">
    <property type="component" value="Chromosome 17"/>
</dbReference>
<dbReference type="Bgee" id="ENSOARG00000011955">
    <property type="expression patterns" value="Expressed in jejunum and 29 other cell types or tissues"/>
</dbReference>
<dbReference type="GO" id="GO:0016324">
    <property type="term" value="C:apical plasma membrane"/>
    <property type="evidence" value="ECO:0000250"/>
    <property type="project" value="UniProtKB"/>
</dbReference>
<dbReference type="GO" id="GO:0005769">
    <property type="term" value="C:early endosome"/>
    <property type="evidence" value="ECO:0007669"/>
    <property type="project" value="Ensembl"/>
</dbReference>
<dbReference type="GO" id="GO:0005794">
    <property type="term" value="C:Golgi apparatus"/>
    <property type="evidence" value="ECO:0007669"/>
    <property type="project" value="Ensembl"/>
</dbReference>
<dbReference type="GO" id="GO:0031965">
    <property type="term" value="C:nuclear membrane"/>
    <property type="evidence" value="ECO:0007669"/>
    <property type="project" value="Ensembl"/>
</dbReference>
<dbReference type="GO" id="GO:0048471">
    <property type="term" value="C:perinuclear region of cytoplasm"/>
    <property type="evidence" value="ECO:0007669"/>
    <property type="project" value="Ensembl"/>
</dbReference>
<dbReference type="GO" id="GO:0015151">
    <property type="term" value="F:alpha-glucoside transmembrane transporter activity"/>
    <property type="evidence" value="ECO:0007669"/>
    <property type="project" value="Ensembl"/>
</dbReference>
<dbReference type="GO" id="GO:0005412">
    <property type="term" value="F:D-glucose:sodium symporter activity"/>
    <property type="evidence" value="ECO:0000250"/>
    <property type="project" value="UniProtKB"/>
</dbReference>
<dbReference type="GO" id="GO:0015371">
    <property type="term" value="F:galactose:sodium symporter activity"/>
    <property type="evidence" value="ECO:0000250"/>
    <property type="project" value="UniProtKB"/>
</dbReference>
<dbReference type="GO" id="GO:0005372">
    <property type="term" value="F:water transmembrane transporter activity"/>
    <property type="evidence" value="ECO:0000250"/>
    <property type="project" value="UniProtKB"/>
</dbReference>
<dbReference type="GO" id="GO:0098708">
    <property type="term" value="P:D-glucose import across plasma membrane"/>
    <property type="evidence" value="ECO:0007669"/>
    <property type="project" value="Ensembl"/>
</dbReference>
<dbReference type="GO" id="GO:0001951">
    <property type="term" value="P:intestinal D-glucose absorption"/>
    <property type="evidence" value="ECO:0000250"/>
    <property type="project" value="UniProtKB"/>
</dbReference>
<dbReference type="GO" id="GO:0035623">
    <property type="term" value="P:renal D-glucose absorption"/>
    <property type="evidence" value="ECO:0000250"/>
    <property type="project" value="UniProtKB"/>
</dbReference>
<dbReference type="GO" id="GO:0098719">
    <property type="term" value="P:sodium ion import across plasma membrane"/>
    <property type="evidence" value="ECO:0007669"/>
    <property type="project" value="Ensembl"/>
</dbReference>
<dbReference type="GO" id="GO:0035377">
    <property type="term" value="P:transepithelial water transport"/>
    <property type="evidence" value="ECO:0007669"/>
    <property type="project" value="Ensembl"/>
</dbReference>
<dbReference type="GO" id="GO:0150104">
    <property type="term" value="P:transport across blood-brain barrier"/>
    <property type="evidence" value="ECO:0007669"/>
    <property type="project" value="Ensembl"/>
</dbReference>
<dbReference type="FunFam" id="1.20.1730.10:FF:000005">
    <property type="entry name" value="sodium/glucose cotransporter 1 isoform X1"/>
    <property type="match status" value="1"/>
</dbReference>
<dbReference type="Gene3D" id="1.20.1730.10">
    <property type="entry name" value="Sodium/glucose cotransporter"/>
    <property type="match status" value="1"/>
</dbReference>
<dbReference type="InterPro" id="IPR038377">
    <property type="entry name" value="Na/Glc_symporter_sf"/>
</dbReference>
<dbReference type="InterPro" id="IPR001734">
    <property type="entry name" value="Na/solute_symporter"/>
</dbReference>
<dbReference type="InterPro" id="IPR018212">
    <property type="entry name" value="Na/solute_symporter_CS"/>
</dbReference>
<dbReference type="NCBIfam" id="TIGR00813">
    <property type="entry name" value="sss"/>
    <property type="match status" value="1"/>
</dbReference>
<dbReference type="PANTHER" id="PTHR11819:SF151">
    <property type="entry name" value="SODIUM_GLUCOSE COTRANSPORTER 1"/>
    <property type="match status" value="1"/>
</dbReference>
<dbReference type="PANTHER" id="PTHR11819">
    <property type="entry name" value="SOLUTE CARRIER FAMILY 5"/>
    <property type="match status" value="1"/>
</dbReference>
<dbReference type="Pfam" id="PF00474">
    <property type="entry name" value="SSF"/>
    <property type="match status" value="1"/>
</dbReference>
<dbReference type="PROSITE" id="PS00456">
    <property type="entry name" value="NA_SOLUT_SYMP_1"/>
    <property type="match status" value="1"/>
</dbReference>
<dbReference type="PROSITE" id="PS00457">
    <property type="entry name" value="NA_SOLUT_SYMP_2"/>
    <property type="match status" value="1"/>
</dbReference>
<dbReference type="PROSITE" id="PS50283">
    <property type="entry name" value="NA_SOLUT_SYMP_3"/>
    <property type="match status" value="1"/>
</dbReference>
<organism>
    <name type="scientific">Ovis aries</name>
    <name type="common">Sheep</name>
    <dbReference type="NCBI Taxonomy" id="9940"/>
    <lineage>
        <taxon>Eukaryota</taxon>
        <taxon>Metazoa</taxon>
        <taxon>Chordata</taxon>
        <taxon>Craniata</taxon>
        <taxon>Vertebrata</taxon>
        <taxon>Euteleostomi</taxon>
        <taxon>Mammalia</taxon>
        <taxon>Eutheria</taxon>
        <taxon>Laurasiatheria</taxon>
        <taxon>Artiodactyla</taxon>
        <taxon>Ruminantia</taxon>
        <taxon>Pecora</taxon>
        <taxon>Bovidae</taxon>
        <taxon>Caprinae</taxon>
        <taxon>Ovis</taxon>
    </lineage>
</organism>
<reference key="1">
    <citation type="journal article" date="1995" name="Biochem. J.">
        <title>Amino acid sequence and the cellular location of the Na(+)-dependent D-glucose symporters (SGLT1) in the ovine enterocyte and the parotid acinar cell.</title>
        <authorList>
            <person name="Tarpey P."/>
            <person name="Wood I.S."/>
            <person name="Shirazi-Beechey S.P."/>
            <person name="Beechey R.B."/>
        </authorList>
    </citation>
    <scope>NUCLEOTIDE SEQUENCE [MRNA]</scope>
    <source>
        <tissue>Jejunal mucosa</tissue>
    </source>
</reference>
<reference key="2">
    <citation type="journal article" date="1997" name="Biochem. Soc. Trans.">
        <title>Determination of the sequence of a mRNA from lactating sheep mammary gland that encodes a protein identical to the Na(+)-dependent glucose transporter (SGLT1).</title>
        <authorList>
            <person name="Shillingford J.M."/>
            <person name="Wood I.S."/>
            <person name="Shennan D.B."/>
            <person name="Shirazi-Beechey S.P."/>
            <person name="Beechey R.B."/>
        </authorList>
    </citation>
    <scope>NUCLEOTIDE SEQUENCE [MRNA]</scope>
    <source>
        <tissue>Mammary gland</tissue>
    </source>
</reference>